<sequence>MPIVGNAGAGSVGAKPGSWLPEWKRIVVLLGSWTLGVRENEKGSGSRLIKWNGSGSREQKICKTTLPLFQACIKHLNSRDLLSTKVLTLALYKYILRAPQTAPHPPAAPPRTEVASSTAGRASRTKSASSTGRVSRANPASFHRPRLLRQAGLHLRRPRLSRQAGLRCHRLHLSAPSRSPTPPPNAVAPSSCSRLPRARLAIRGRRASSHSATVDTACSRRHSCDCLNRHRHLAVVATSAVAATTVAVPTACLCCGQIPLGRHRHNQAVTGRDLTVAALVLLAEVARETTGYSNGAPDPAAVVAISCCRPGSIPPSTAAAGSCRRHPAAVTARWPLAGGARSGRRDNPRRQGTGATRTGISKTYVSSVVAKTLALQELKGNIRVFCRVRPLLPNESGAVAYPKSGENLGRGIELTHNGQMYFFTFDKVFEQSTSQEDVFIEISHLVQSALDGYKVCIFAYGQTGSGKTYTMMGNPELHDQKGLIPRSLEQIFQTSQALISQGWKYKMQASMLEIYNEAICDLLATNHTTIQDGGASKYSIKHDANGNTHVSDLIIVDVLSINEVSSLLKRAAQSRSVGRTQMNEESSRSHCVFTLRFFGVNEGTDQQVQGVLNLIDLAGSERLNKSGATGDRLKETQAINKSLSCLSDVIFSIAKKEEHVPFRNSKLTYLLQPCLGGDSKTLMFVNLSPEVSSTGESICSLRFAARVNSCEIGIPRRQTQVRSLAQG</sequence>
<protein>
    <recommendedName>
        <fullName evidence="4">Kinesin-like protein KIN-14G</fullName>
    </recommendedName>
</protein>
<comment type="similarity">
    <text evidence="3">Belongs to the TRAFAC class myosin-kinesin ATPase superfamily. Kinesin family. KIN-14 subfamily.</text>
</comment>
<comment type="sequence caution" evidence="4">
    <conflict type="erroneous gene model prediction">
        <sequence resource="EMBL-CDS" id="AAP44761"/>
    </conflict>
</comment>
<comment type="sequence caution" evidence="4">
    <conflict type="erroneous gene model prediction">
        <sequence resource="EMBL-CDS" id="ABG00040"/>
    </conflict>
</comment>
<comment type="sequence caution" evidence="4">
    <conflict type="erroneous gene model prediction">
        <sequence resource="EMBL-CDS" id="BAF13901"/>
    </conflict>
</comment>
<comment type="sequence caution" evidence="4">
    <conflict type="erroneous translation">
        <sequence resource="EMBL-CDS" id="BAS87500"/>
    </conflict>
</comment>
<proteinExistence type="evidence at transcript level"/>
<feature type="chain" id="PRO_0000438633" description="Kinesin-like protein KIN-14G">
    <location>
        <begin position="1"/>
        <end position="727"/>
    </location>
</feature>
<feature type="domain" description="Kinesin motor" evidence="1">
    <location>
        <begin position="381"/>
        <end position="710"/>
    </location>
</feature>
<feature type="region of interest" description="Disordered" evidence="2">
    <location>
        <begin position="100"/>
        <end position="156"/>
    </location>
</feature>
<feature type="region of interest" description="Disordered" evidence="2">
    <location>
        <begin position="172"/>
        <end position="194"/>
    </location>
</feature>
<feature type="region of interest" description="Disordered" evidence="2">
    <location>
        <begin position="336"/>
        <end position="357"/>
    </location>
</feature>
<feature type="compositionally biased region" description="Polar residues" evidence="2">
    <location>
        <begin position="114"/>
        <end position="133"/>
    </location>
</feature>
<feature type="binding site" evidence="1">
    <location>
        <begin position="461"/>
        <end position="468"/>
    </location>
    <ligand>
        <name>ATP</name>
        <dbReference type="ChEBI" id="CHEBI:30616"/>
    </ligand>
</feature>
<feature type="sequence conflict" description="In Ref. 5; AK243292." evidence="4" ref="5">
    <original>N</original>
    <variation>D</variation>
    <location>
        <position position="708"/>
    </location>
</feature>
<accession>Q7Y1C8</accession>
<accession>A0A0P0W5T5</accession>
<accession>Q0DLI7</accession>
<accession>Q10A78</accession>
<name>KN14G_ORYSJ</name>
<dbReference type="EMBL" id="AC092263">
    <property type="protein sequence ID" value="AAP44761.1"/>
    <property type="status" value="ALT_SEQ"/>
    <property type="molecule type" value="Genomic_DNA"/>
</dbReference>
<dbReference type="EMBL" id="DP000009">
    <property type="protein sequence ID" value="ABG00040.1"/>
    <property type="status" value="ALT_SEQ"/>
    <property type="molecule type" value="Genomic_DNA"/>
</dbReference>
<dbReference type="EMBL" id="AP008209">
    <property type="protein sequence ID" value="BAF13901.2"/>
    <property type="status" value="ALT_SEQ"/>
    <property type="molecule type" value="Genomic_DNA"/>
</dbReference>
<dbReference type="EMBL" id="AP014959">
    <property type="protein sequence ID" value="BAS87500.1"/>
    <property type="status" value="ALT_SEQ"/>
    <property type="molecule type" value="Genomic_DNA"/>
</dbReference>
<dbReference type="EMBL" id="AK243292">
    <property type="status" value="NOT_ANNOTATED_CDS"/>
    <property type="molecule type" value="mRNA"/>
</dbReference>
<dbReference type="SMR" id="Q7Y1C8"/>
<dbReference type="STRING" id="39947.Q7Y1C8"/>
<dbReference type="PaxDb" id="39947-Q7Y1C8"/>
<dbReference type="KEGG" id="dosa:Os03g0862200"/>
<dbReference type="InParanoid" id="Q7Y1C8"/>
<dbReference type="Proteomes" id="UP000000763">
    <property type="component" value="Chromosome 3"/>
</dbReference>
<dbReference type="Proteomes" id="UP000059680">
    <property type="component" value="Chromosome 3"/>
</dbReference>
<dbReference type="GO" id="GO:0005737">
    <property type="term" value="C:cytoplasm"/>
    <property type="evidence" value="ECO:0000318"/>
    <property type="project" value="GO_Central"/>
</dbReference>
<dbReference type="GO" id="GO:0005871">
    <property type="term" value="C:kinesin complex"/>
    <property type="evidence" value="ECO:0000318"/>
    <property type="project" value="GO_Central"/>
</dbReference>
<dbReference type="GO" id="GO:0005874">
    <property type="term" value="C:microtubule"/>
    <property type="evidence" value="ECO:0000318"/>
    <property type="project" value="GO_Central"/>
</dbReference>
<dbReference type="GO" id="GO:0005524">
    <property type="term" value="F:ATP binding"/>
    <property type="evidence" value="ECO:0007669"/>
    <property type="project" value="UniProtKB-KW"/>
</dbReference>
<dbReference type="GO" id="GO:0016887">
    <property type="term" value="F:ATP hydrolysis activity"/>
    <property type="evidence" value="ECO:0000318"/>
    <property type="project" value="GO_Central"/>
</dbReference>
<dbReference type="GO" id="GO:0008017">
    <property type="term" value="F:microtubule binding"/>
    <property type="evidence" value="ECO:0000318"/>
    <property type="project" value="GO_Central"/>
</dbReference>
<dbReference type="GO" id="GO:0003777">
    <property type="term" value="F:microtubule motor activity"/>
    <property type="evidence" value="ECO:0000318"/>
    <property type="project" value="GO_Central"/>
</dbReference>
<dbReference type="GO" id="GO:0007018">
    <property type="term" value="P:microtubule-based movement"/>
    <property type="evidence" value="ECO:0000318"/>
    <property type="project" value="GO_Central"/>
</dbReference>
<dbReference type="GO" id="GO:0051225">
    <property type="term" value="P:spindle assembly"/>
    <property type="evidence" value="ECO:0000318"/>
    <property type="project" value="GO_Central"/>
</dbReference>
<dbReference type="CDD" id="cd01366">
    <property type="entry name" value="KISc_C_terminal"/>
    <property type="match status" value="1"/>
</dbReference>
<dbReference type="FunFam" id="3.40.850.10:FF:000048">
    <property type="entry name" value="Kinesin-like protein"/>
    <property type="match status" value="1"/>
</dbReference>
<dbReference type="Gene3D" id="3.40.850.10">
    <property type="entry name" value="Kinesin motor domain"/>
    <property type="match status" value="1"/>
</dbReference>
<dbReference type="InterPro" id="IPR027640">
    <property type="entry name" value="Kinesin-like_fam"/>
</dbReference>
<dbReference type="InterPro" id="IPR019821">
    <property type="entry name" value="Kinesin_motor_CS"/>
</dbReference>
<dbReference type="InterPro" id="IPR001752">
    <property type="entry name" value="Kinesin_motor_dom"/>
</dbReference>
<dbReference type="InterPro" id="IPR036961">
    <property type="entry name" value="Kinesin_motor_dom_sf"/>
</dbReference>
<dbReference type="InterPro" id="IPR027417">
    <property type="entry name" value="P-loop_NTPase"/>
</dbReference>
<dbReference type="PANTHER" id="PTHR47972">
    <property type="entry name" value="KINESIN-LIKE PROTEIN KLP-3"/>
    <property type="match status" value="1"/>
</dbReference>
<dbReference type="PANTHER" id="PTHR47972:SF45">
    <property type="entry name" value="PROTEIN CLARET SEGREGATIONAL"/>
    <property type="match status" value="1"/>
</dbReference>
<dbReference type="Pfam" id="PF00225">
    <property type="entry name" value="Kinesin"/>
    <property type="match status" value="1"/>
</dbReference>
<dbReference type="PRINTS" id="PR00380">
    <property type="entry name" value="KINESINHEAVY"/>
</dbReference>
<dbReference type="SMART" id="SM00129">
    <property type="entry name" value="KISc"/>
    <property type="match status" value="1"/>
</dbReference>
<dbReference type="SUPFAM" id="SSF52540">
    <property type="entry name" value="P-loop containing nucleoside triphosphate hydrolases"/>
    <property type="match status" value="1"/>
</dbReference>
<dbReference type="PROSITE" id="PS00411">
    <property type="entry name" value="KINESIN_MOTOR_1"/>
    <property type="match status" value="1"/>
</dbReference>
<dbReference type="PROSITE" id="PS50067">
    <property type="entry name" value="KINESIN_MOTOR_2"/>
    <property type="match status" value="1"/>
</dbReference>
<reference key="1">
    <citation type="journal article" date="2005" name="Genome Res.">
        <title>Sequence, annotation, and analysis of synteny between rice chromosome 3 and diverged grass species.</title>
        <authorList>
            <consortium name="The rice chromosome 3 sequencing consortium"/>
            <person name="Buell C.R."/>
            <person name="Yuan Q."/>
            <person name="Ouyang S."/>
            <person name="Liu J."/>
            <person name="Zhu W."/>
            <person name="Wang A."/>
            <person name="Maiti R."/>
            <person name="Haas B."/>
            <person name="Wortman J."/>
            <person name="Pertea M."/>
            <person name="Jones K.M."/>
            <person name="Kim M."/>
            <person name="Overton L."/>
            <person name="Tsitrin T."/>
            <person name="Fadrosh D."/>
            <person name="Bera J."/>
            <person name="Weaver B."/>
            <person name="Jin S."/>
            <person name="Johri S."/>
            <person name="Reardon M."/>
            <person name="Webb K."/>
            <person name="Hill J."/>
            <person name="Moffat K."/>
            <person name="Tallon L."/>
            <person name="Van Aken S."/>
            <person name="Lewis M."/>
            <person name="Utterback T."/>
            <person name="Feldblyum T."/>
            <person name="Zismann V."/>
            <person name="Iobst S."/>
            <person name="Hsiao J."/>
            <person name="de Vazeille A.R."/>
            <person name="Salzberg S.L."/>
            <person name="White O."/>
            <person name="Fraser C.M."/>
            <person name="Yu Y."/>
            <person name="Kim H."/>
            <person name="Rambo T."/>
            <person name="Currie J."/>
            <person name="Collura K."/>
            <person name="Kernodle-Thompson S."/>
            <person name="Wei F."/>
            <person name="Kudrna K."/>
            <person name="Ammiraju J.S.S."/>
            <person name="Luo M."/>
            <person name="Goicoechea J.L."/>
            <person name="Wing R.A."/>
            <person name="Henry D."/>
            <person name="Oates R."/>
            <person name="Palmer M."/>
            <person name="Pries G."/>
            <person name="Saski C."/>
            <person name="Simmons J."/>
            <person name="Soderlund C."/>
            <person name="Nelson W."/>
            <person name="de la Bastide M."/>
            <person name="Spiegel L."/>
            <person name="Nascimento L."/>
            <person name="Huang E."/>
            <person name="Preston R."/>
            <person name="Zutavern T."/>
            <person name="Palmer L."/>
            <person name="O'Shaughnessy A."/>
            <person name="Dike S."/>
            <person name="McCombie W.R."/>
            <person name="Minx P."/>
            <person name="Cordum H."/>
            <person name="Wilson R."/>
            <person name="Jin W."/>
            <person name="Lee H.R."/>
            <person name="Jiang J."/>
            <person name="Jackson S."/>
        </authorList>
    </citation>
    <scope>NUCLEOTIDE SEQUENCE [LARGE SCALE GENOMIC DNA]</scope>
    <source>
        <strain>cv. Nipponbare</strain>
    </source>
</reference>
<reference key="2">
    <citation type="journal article" date="2005" name="Nature">
        <title>The map-based sequence of the rice genome.</title>
        <authorList>
            <consortium name="International rice genome sequencing project (IRGSP)"/>
        </authorList>
    </citation>
    <scope>NUCLEOTIDE SEQUENCE [LARGE SCALE GENOMIC DNA]</scope>
    <source>
        <strain>cv. Nipponbare</strain>
    </source>
</reference>
<reference key="3">
    <citation type="journal article" date="2008" name="Nucleic Acids Res.">
        <title>The rice annotation project database (RAP-DB): 2008 update.</title>
        <authorList>
            <consortium name="The rice annotation project (RAP)"/>
        </authorList>
    </citation>
    <scope>GENOME REANNOTATION</scope>
    <source>
        <strain>cv. Nipponbare</strain>
    </source>
</reference>
<reference key="4">
    <citation type="journal article" date="2013" name="Rice">
        <title>Improvement of the Oryza sativa Nipponbare reference genome using next generation sequence and optical map data.</title>
        <authorList>
            <person name="Kawahara Y."/>
            <person name="de la Bastide M."/>
            <person name="Hamilton J.P."/>
            <person name="Kanamori H."/>
            <person name="McCombie W.R."/>
            <person name="Ouyang S."/>
            <person name="Schwartz D.C."/>
            <person name="Tanaka T."/>
            <person name="Wu J."/>
            <person name="Zhou S."/>
            <person name="Childs K.L."/>
            <person name="Davidson R.M."/>
            <person name="Lin H."/>
            <person name="Quesada-Ocampo L."/>
            <person name="Vaillancourt B."/>
            <person name="Sakai H."/>
            <person name="Lee S.S."/>
            <person name="Kim J."/>
            <person name="Numa H."/>
            <person name="Itoh T."/>
            <person name="Buell C.R."/>
            <person name="Matsumoto T."/>
        </authorList>
    </citation>
    <scope>GENOME REANNOTATION</scope>
    <source>
        <strain>cv. Nipponbare</strain>
    </source>
</reference>
<reference key="5">
    <citation type="submission" date="2006-10" db="EMBL/GenBank/DDBJ databases">
        <title>Oryza sativa full length cDNA.</title>
        <authorList>
            <consortium name="The rice full-length cDNA consortium"/>
        </authorList>
    </citation>
    <scope>NUCLEOTIDE SEQUENCE [LARGE SCALE MRNA] OF 707-727</scope>
    <source>
        <strain>cv. Nipponbare</strain>
    </source>
</reference>
<reference key="6">
    <citation type="journal article" date="2009" name="Ann. Bot.">
        <title>Evaluating the microtubule cytoskeleton and its interacting proteins in monocots by mining the rice genome.</title>
        <authorList>
            <person name="Guo L."/>
            <person name="Ho C.M."/>
            <person name="Kong Z."/>
            <person name="Lee Y.R."/>
            <person name="Qian Q."/>
            <person name="Liu B."/>
        </authorList>
    </citation>
    <scope>GENE FAMILY</scope>
    <scope>NOMENCLATURE</scope>
</reference>
<keyword id="KW-0067">ATP-binding</keyword>
<keyword id="KW-0493">Microtubule</keyword>
<keyword id="KW-0505">Motor protein</keyword>
<keyword id="KW-0547">Nucleotide-binding</keyword>
<keyword id="KW-1185">Reference proteome</keyword>
<organism>
    <name type="scientific">Oryza sativa subsp. japonica</name>
    <name type="common">Rice</name>
    <dbReference type="NCBI Taxonomy" id="39947"/>
    <lineage>
        <taxon>Eukaryota</taxon>
        <taxon>Viridiplantae</taxon>
        <taxon>Streptophyta</taxon>
        <taxon>Embryophyta</taxon>
        <taxon>Tracheophyta</taxon>
        <taxon>Spermatophyta</taxon>
        <taxon>Magnoliopsida</taxon>
        <taxon>Liliopsida</taxon>
        <taxon>Poales</taxon>
        <taxon>Poaceae</taxon>
        <taxon>BOP clade</taxon>
        <taxon>Oryzoideae</taxon>
        <taxon>Oryzeae</taxon>
        <taxon>Oryzinae</taxon>
        <taxon>Oryza</taxon>
        <taxon>Oryza sativa</taxon>
    </lineage>
</organism>
<gene>
    <name evidence="4" type="primary">KIN14G</name>
    <name evidence="7" type="ordered locus">Os03g0862200</name>
    <name evidence="6" type="ordered locus">LOC_Os03g64415</name>
    <name evidence="5" type="ORF">OSJNBa0033P04.11</name>
</gene>
<evidence type="ECO:0000255" key="1">
    <source>
        <dbReference type="PROSITE-ProRule" id="PRU00283"/>
    </source>
</evidence>
<evidence type="ECO:0000256" key="2">
    <source>
        <dbReference type="SAM" id="MobiDB-lite"/>
    </source>
</evidence>
<evidence type="ECO:0000303" key="3">
    <source>
    </source>
</evidence>
<evidence type="ECO:0000305" key="4"/>
<evidence type="ECO:0000312" key="5">
    <source>
        <dbReference type="EMBL" id="AAP44761.1"/>
    </source>
</evidence>
<evidence type="ECO:0000312" key="6">
    <source>
        <dbReference type="EMBL" id="ABG00040.1"/>
    </source>
</evidence>
<evidence type="ECO:0000312" key="7">
    <source>
        <dbReference type="EMBL" id="BAS87500.1"/>
    </source>
</evidence>